<organism>
    <name type="scientific">Vibrio cholerae serotype O1 (strain ATCC 39315 / El Tor Inaba N16961)</name>
    <dbReference type="NCBI Taxonomy" id="243277"/>
    <lineage>
        <taxon>Bacteria</taxon>
        <taxon>Pseudomonadati</taxon>
        <taxon>Pseudomonadota</taxon>
        <taxon>Gammaproteobacteria</taxon>
        <taxon>Vibrionales</taxon>
        <taxon>Vibrionaceae</taxon>
        <taxon>Vibrio</taxon>
    </lineage>
</organism>
<comment type="function">
    <text evidence="1">The alpha subunit is responsible for the aldol cleavage of indoleglycerol phosphate to indole and glyceraldehyde 3-phosphate.</text>
</comment>
<comment type="catalytic activity">
    <reaction evidence="1">
        <text>(1S,2R)-1-C-(indol-3-yl)glycerol 3-phosphate + L-serine = D-glyceraldehyde 3-phosphate + L-tryptophan + H2O</text>
        <dbReference type="Rhea" id="RHEA:10532"/>
        <dbReference type="ChEBI" id="CHEBI:15377"/>
        <dbReference type="ChEBI" id="CHEBI:33384"/>
        <dbReference type="ChEBI" id="CHEBI:57912"/>
        <dbReference type="ChEBI" id="CHEBI:58866"/>
        <dbReference type="ChEBI" id="CHEBI:59776"/>
        <dbReference type="EC" id="4.2.1.20"/>
    </reaction>
</comment>
<comment type="pathway">
    <text evidence="1">Amino-acid biosynthesis; L-tryptophan biosynthesis; L-tryptophan from chorismate: step 5/5.</text>
</comment>
<comment type="subunit">
    <text evidence="1">Tetramer of two alpha and two beta chains.</text>
</comment>
<comment type="similarity">
    <text evidence="1">Belongs to the TrpA family.</text>
</comment>
<proteinExistence type="evidence at protein level"/>
<dbReference type="EC" id="4.2.1.20" evidence="1"/>
<dbReference type="EMBL" id="AE003852">
    <property type="protein sequence ID" value="AAF94328.1"/>
    <property type="molecule type" value="Genomic_DNA"/>
</dbReference>
<dbReference type="PIR" id="D82232">
    <property type="entry name" value="D82232"/>
</dbReference>
<dbReference type="RefSeq" id="NP_230814.1">
    <property type="nucleotide sequence ID" value="NC_002505.1"/>
</dbReference>
<dbReference type="RefSeq" id="WP_001083161.1">
    <property type="nucleotide sequence ID" value="NZ_LT906614.1"/>
</dbReference>
<dbReference type="PDB" id="3NAV">
    <property type="method" value="X-ray"/>
    <property type="resolution" value="2.10 A"/>
    <property type="chains" value="A/B=1-268"/>
</dbReference>
<dbReference type="PDBsum" id="3NAV"/>
<dbReference type="SMR" id="Q9KST7"/>
<dbReference type="STRING" id="243277.VC_1169"/>
<dbReference type="DNASU" id="2614602"/>
<dbReference type="EnsemblBacteria" id="AAF94328">
    <property type="protein sequence ID" value="AAF94328"/>
    <property type="gene ID" value="VC_1169"/>
</dbReference>
<dbReference type="KEGG" id="vch:VC_1169"/>
<dbReference type="PATRIC" id="fig|243277.26.peg.1118"/>
<dbReference type="eggNOG" id="COG0159">
    <property type="taxonomic scope" value="Bacteria"/>
</dbReference>
<dbReference type="HOGENOM" id="CLU_016734_0_4_6"/>
<dbReference type="UniPathway" id="UPA00035">
    <property type="reaction ID" value="UER00044"/>
</dbReference>
<dbReference type="EvolutionaryTrace" id="Q9KST7"/>
<dbReference type="Proteomes" id="UP000000584">
    <property type="component" value="Chromosome 1"/>
</dbReference>
<dbReference type="GO" id="GO:0005829">
    <property type="term" value="C:cytosol"/>
    <property type="evidence" value="ECO:0000318"/>
    <property type="project" value="GO_Central"/>
</dbReference>
<dbReference type="GO" id="GO:0004834">
    <property type="term" value="F:tryptophan synthase activity"/>
    <property type="evidence" value="ECO:0000318"/>
    <property type="project" value="GO_Central"/>
</dbReference>
<dbReference type="GO" id="GO:0000162">
    <property type="term" value="P:L-tryptophan biosynthetic process"/>
    <property type="evidence" value="ECO:0000318"/>
    <property type="project" value="GO_Central"/>
</dbReference>
<dbReference type="CDD" id="cd04724">
    <property type="entry name" value="Tryptophan_synthase_alpha"/>
    <property type="match status" value="1"/>
</dbReference>
<dbReference type="FunFam" id="3.20.20.70:FF:000037">
    <property type="entry name" value="Tryptophan synthase alpha chain"/>
    <property type="match status" value="1"/>
</dbReference>
<dbReference type="Gene3D" id="3.20.20.70">
    <property type="entry name" value="Aldolase class I"/>
    <property type="match status" value="1"/>
</dbReference>
<dbReference type="HAMAP" id="MF_00131">
    <property type="entry name" value="Trp_synth_alpha"/>
    <property type="match status" value="1"/>
</dbReference>
<dbReference type="InterPro" id="IPR013785">
    <property type="entry name" value="Aldolase_TIM"/>
</dbReference>
<dbReference type="InterPro" id="IPR011060">
    <property type="entry name" value="RibuloseP-bd_barrel"/>
</dbReference>
<dbReference type="InterPro" id="IPR018204">
    <property type="entry name" value="Trp_synthase_alpha_AS"/>
</dbReference>
<dbReference type="InterPro" id="IPR002028">
    <property type="entry name" value="Trp_synthase_suA"/>
</dbReference>
<dbReference type="NCBIfam" id="TIGR00262">
    <property type="entry name" value="trpA"/>
    <property type="match status" value="1"/>
</dbReference>
<dbReference type="PANTHER" id="PTHR43406:SF1">
    <property type="entry name" value="TRYPTOPHAN SYNTHASE ALPHA CHAIN, CHLOROPLASTIC"/>
    <property type="match status" value="1"/>
</dbReference>
<dbReference type="PANTHER" id="PTHR43406">
    <property type="entry name" value="TRYPTOPHAN SYNTHASE, ALPHA CHAIN"/>
    <property type="match status" value="1"/>
</dbReference>
<dbReference type="Pfam" id="PF00290">
    <property type="entry name" value="Trp_syntA"/>
    <property type="match status" value="1"/>
</dbReference>
<dbReference type="SUPFAM" id="SSF51366">
    <property type="entry name" value="Ribulose-phoshate binding barrel"/>
    <property type="match status" value="1"/>
</dbReference>
<dbReference type="PROSITE" id="PS00167">
    <property type="entry name" value="TRP_SYNTHASE_ALPHA"/>
    <property type="match status" value="1"/>
</dbReference>
<keyword id="KW-0002">3D-structure</keyword>
<keyword id="KW-0028">Amino-acid biosynthesis</keyword>
<keyword id="KW-0057">Aromatic amino acid biosynthesis</keyword>
<keyword id="KW-0456">Lyase</keyword>
<keyword id="KW-1185">Reference proteome</keyword>
<keyword id="KW-0822">Tryptophan biosynthesis</keyword>
<feature type="chain" id="PRO_0000098868" description="Tryptophan synthase alpha chain">
    <location>
        <begin position="1"/>
        <end position="268"/>
    </location>
</feature>
<feature type="active site" description="Proton acceptor" evidence="1">
    <location>
        <position position="49"/>
    </location>
</feature>
<feature type="active site" description="Proton acceptor" evidence="1">
    <location>
        <position position="60"/>
    </location>
</feature>
<feature type="helix" evidence="2">
    <location>
        <begin position="3"/>
        <end position="13"/>
    </location>
</feature>
<feature type="strand" evidence="2">
    <location>
        <begin position="18"/>
        <end position="24"/>
    </location>
</feature>
<feature type="helix" evidence="2">
    <location>
        <begin position="30"/>
        <end position="42"/>
    </location>
</feature>
<feature type="strand" evidence="2">
    <location>
        <begin position="46"/>
        <end position="51"/>
    </location>
</feature>
<feature type="helix" evidence="2">
    <location>
        <begin position="57"/>
        <end position="59"/>
    </location>
</feature>
<feature type="helix" evidence="2">
    <location>
        <begin position="63"/>
        <end position="73"/>
    </location>
</feature>
<feature type="helix" evidence="2">
    <location>
        <begin position="78"/>
        <end position="91"/>
    </location>
</feature>
<feature type="strand" evidence="2">
    <location>
        <begin position="97"/>
        <end position="101"/>
    </location>
</feature>
<feature type="helix" evidence="2">
    <location>
        <begin position="103"/>
        <end position="108"/>
    </location>
</feature>
<feature type="helix" evidence="2">
    <location>
        <begin position="111"/>
        <end position="121"/>
    </location>
</feature>
<feature type="strand" evidence="2">
    <location>
        <begin position="125"/>
        <end position="128"/>
    </location>
</feature>
<feature type="helix" evidence="2">
    <location>
        <begin position="133"/>
        <end position="135"/>
    </location>
</feature>
<feature type="helix" evidence="2">
    <location>
        <begin position="137"/>
        <end position="145"/>
    </location>
</feature>
<feature type="strand" evidence="2">
    <location>
        <begin position="149"/>
        <end position="154"/>
    </location>
</feature>
<feature type="helix" evidence="2">
    <location>
        <begin position="160"/>
        <end position="169"/>
    </location>
</feature>
<feature type="strand" evidence="2">
    <location>
        <begin position="174"/>
        <end position="176"/>
    </location>
</feature>
<feature type="helix" evidence="2">
    <location>
        <begin position="191"/>
        <end position="202"/>
    </location>
</feature>
<feature type="strand" evidence="2">
    <location>
        <begin position="208"/>
        <end position="210"/>
    </location>
</feature>
<feature type="helix" evidence="2">
    <location>
        <begin position="217"/>
        <end position="225"/>
    </location>
</feature>
<feature type="strand" evidence="2">
    <location>
        <begin position="229"/>
        <end position="234"/>
    </location>
</feature>
<feature type="helix" evidence="2">
    <location>
        <begin position="235"/>
        <end position="243"/>
    </location>
</feature>
<feature type="turn" evidence="2">
    <location>
        <begin position="244"/>
        <end position="246"/>
    </location>
</feature>
<feature type="helix" evidence="2">
    <location>
        <begin position="248"/>
        <end position="264"/>
    </location>
</feature>
<accession>Q9KST7</accession>
<sequence>MNRYQALFQRLSAAQQGAFVPFVTIGDPNPEQSLAIMQTLIDAGADALELGMPFSDPLADGPTIQGANLRALAAKTTPDICFELIAQIRARNPETPIGLLMYANLVYARGIDDFYQRCQKAGVDSVLIADVPTNESQPFVAAAEKFGIQPIFIAPPTASDETLRAVAQLGKGYTYLLSRAGVTGAETKANMPVHALLERLQQFDAPPALLGFGISEPAQVKQAIEAGAAGAISGSAVVKIIETHLDNPAKQLTELANFTQAMKKATKI</sequence>
<reference key="1">
    <citation type="journal article" date="2000" name="Nature">
        <title>DNA sequence of both chromosomes of the cholera pathogen Vibrio cholerae.</title>
        <authorList>
            <person name="Heidelberg J.F."/>
            <person name="Eisen J.A."/>
            <person name="Nelson W.C."/>
            <person name="Clayton R.A."/>
            <person name="Gwinn M.L."/>
            <person name="Dodson R.J."/>
            <person name="Haft D.H."/>
            <person name="Hickey E.K."/>
            <person name="Peterson J.D."/>
            <person name="Umayam L.A."/>
            <person name="Gill S.R."/>
            <person name="Nelson K.E."/>
            <person name="Read T.D."/>
            <person name="Tettelin H."/>
            <person name="Richardson D.L."/>
            <person name="Ermolaeva M.D."/>
            <person name="Vamathevan J.J."/>
            <person name="Bass S."/>
            <person name="Qin H."/>
            <person name="Dragoi I."/>
            <person name="Sellers P."/>
            <person name="McDonald L.A."/>
            <person name="Utterback T.R."/>
            <person name="Fleischmann R.D."/>
            <person name="Nierman W.C."/>
            <person name="White O."/>
            <person name="Salzberg S.L."/>
            <person name="Smith H.O."/>
            <person name="Colwell R.R."/>
            <person name="Mekalanos J.J."/>
            <person name="Venter J.C."/>
            <person name="Fraser C.M."/>
        </authorList>
    </citation>
    <scope>NUCLEOTIDE SEQUENCE [LARGE SCALE GENOMIC DNA]</scope>
    <source>
        <strain>ATCC 39315 / El Tor Inaba N16961</strain>
    </source>
</reference>
<name>TRPA_VIBCH</name>
<protein>
    <recommendedName>
        <fullName evidence="1">Tryptophan synthase alpha chain</fullName>
        <ecNumber evidence="1">4.2.1.20</ecNumber>
    </recommendedName>
</protein>
<gene>
    <name evidence="1" type="primary">trpA</name>
    <name type="ordered locus">VC_1169</name>
</gene>
<evidence type="ECO:0000255" key="1">
    <source>
        <dbReference type="HAMAP-Rule" id="MF_00131"/>
    </source>
</evidence>
<evidence type="ECO:0007829" key="2">
    <source>
        <dbReference type="PDB" id="3NAV"/>
    </source>
</evidence>